<protein>
    <recommendedName>
        <fullName>Cytosolic Fe-S cluster assembly factor nar1</fullName>
    </recommendedName>
    <alternativeName>
        <fullName>Nuclear architecture-related protein 1</fullName>
    </alternativeName>
</protein>
<evidence type="ECO:0000250" key="1"/>
<evidence type="ECO:0000255" key="2"/>
<evidence type="ECO:0000256" key="3">
    <source>
        <dbReference type="SAM" id="MobiDB-lite"/>
    </source>
</evidence>
<evidence type="ECO:0000305" key="4"/>
<organism>
    <name type="scientific">Penicillium rubens (strain ATCC 28089 / DSM 1075 / NRRL 1951 / Wisconsin 54-1255)</name>
    <name type="common">Penicillium chrysogenum</name>
    <dbReference type="NCBI Taxonomy" id="500485"/>
    <lineage>
        <taxon>Eukaryota</taxon>
        <taxon>Fungi</taxon>
        <taxon>Dikarya</taxon>
        <taxon>Ascomycota</taxon>
        <taxon>Pezizomycotina</taxon>
        <taxon>Eurotiomycetes</taxon>
        <taxon>Eurotiomycetidae</taxon>
        <taxon>Eurotiales</taxon>
        <taxon>Aspergillaceae</taxon>
        <taxon>Penicillium</taxon>
        <taxon>Penicillium chrysogenum species complex</taxon>
    </lineage>
</organism>
<accession>B6HUC4</accession>
<comment type="function">
    <text evidence="1">Component of the cytosolic Fe/S protein assembly machinery. Required for maturation of extramitochondrial Fe/S proteins. May play a role in the transfer of pre-assembled Fe/S clusters to target apoproteins (By similarity).</text>
</comment>
<comment type="similarity">
    <text evidence="4">Belongs to the NARF family.</text>
</comment>
<dbReference type="EMBL" id="AM920437">
    <property type="protein sequence ID" value="CAP97799.1"/>
    <property type="molecule type" value="Genomic_DNA"/>
</dbReference>
<dbReference type="RefSeq" id="XP_002564546.1">
    <property type="nucleotide sequence ID" value="XM_002564500.1"/>
</dbReference>
<dbReference type="SMR" id="B6HUC4"/>
<dbReference type="STRING" id="500485.B6HUC4"/>
<dbReference type="GeneID" id="8313658"/>
<dbReference type="KEGG" id="pcs:N7525_005710"/>
<dbReference type="VEuPathDB" id="FungiDB:PCH_Pc22g05110"/>
<dbReference type="eggNOG" id="KOG2439">
    <property type="taxonomic scope" value="Eukaryota"/>
</dbReference>
<dbReference type="HOGENOM" id="CLU_018240_0_1_1"/>
<dbReference type="OMA" id="GYLHHVL"/>
<dbReference type="OrthoDB" id="10253113at2759"/>
<dbReference type="BioCyc" id="PCHR:PC22G05110-MONOMER"/>
<dbReference type="Proteomes" id="UP000000724">
    <property type="component" value="Contig Pc00c22"/>
</dbReference>
<dbReference type="GO" id="GO:0051539">
    <property type="term" value="F:4 iron, 4 sulfur cluster binding"/>
    <property type="evidence" value="ECO:0007669"/>
    <property type="project" value="UniProtKB-KW"/>
</dbReference>
<dbReference type="GO" id="GO:0051536">
    <property type="term" value="F:iron-sulfur cluster binding"/>
    <property type="evidence" value="ECO:0000250"/>
    <property type="project" value="UniProtKB"/>
</dbReference>
<dbReference type="GO" id="GO:0046872">
    <property type="term" value="F:metal ion binding"/>
    <property type="evidence" value="ECO:0007669"/>
    <property type="project" value="UniProtKB-KW"/>
</dbReference>
<dbReference type="GO" id="GO:0016226">
    <property type="term" value="P:iron-sulfur cluster assembly"/>
    <property type="evidence" value="ECO:0000250"/>
    <property type="project" value="UniProtKB"/>
</dbReference>
<dbReference type="FunFam" id="3.30.70.20:FF:000042">
    <property type="entry name" value="Cytosolic Fe-S cluster assembly factor NAR1"/>
    <property type="match status" value="1"/>
</dbReference>
<dbReference type="Gene3D" id="3.40.50.1780">
    <property type="match status" value="2"/>
</dbReference>
<dbReference type="Gene3D" id="3.40.950.10">
    <property type="entry name" value="Fe-only Hydrogenase (Larger Subunit), Chain L, domain 3"/>
    <property type="match status" value="2"/>
</dbReference>
<dbReference type="InterPro" id="IPR050340">
    <property type="entry name" value="Cytosolic_Fe-S_CAF"/>
</dbReference>
<dbReference type="InterPro" id="IPR009016">
    <property type="entry name" value="Fe_hydrogenase"/>
</dbReference>
<dbReference type="InterPro" id="IPR004108">
    <property type="entry name" value="Fe_hydrogenase_lsu_C"/>
</dbReference>
<dbReference type="PANTHER" id="PTHR11615">
    <property type="entry name" value="NITRATE, FORMATE, IRON DEHYDROGENASE"/>
    <property type="match status" value="1"/>
</dbReference>
<dbReference type="Pfam" id="PF02906">
    <property type="entry name" value="Fe_hyd_lg_C"/>
    <property type="match status" value="1"/>
</dbReference>
<dbReference type="SUPFAM" id="SSF53920">
    <property type="entry name" value="Fe-only hydrogenase"/>
    <property type="match status" value="1"/>
</dbReference>
<keyword id="KW-0004">4Fe-4S</keyword>
<keyword id="KW-0408">Iron</keyword>
<keyword id="KW-0411">Iron-sulfur</keyword>
<keyword id="KW-0479">Metal-binding</keyword>
<keyword id="KW-1185">Reference proteome</keyword>
<name>NAR1_PENRW</name>
<reference key="1">
    <citation type="journal article" date="2008" name="Nat. Biotechnol.">
        <title>Genome sequencing and analysis of the filamentous fungus Penicillium chrysogenum.</title>
        <authorList>
            <person name="van den Berg M.A."/>
            <person name="Albang R."/>
            <person name="Albermann K."/>
            <person name="Badger J.H."/>
            <person name="Daran J.-M."/>
            <person name="Driessen A.J.M."/>
            <person name="Garcia-Estrada C."/>
            <person name="Fedorova N.D."/>
            <person name="Harris D.M."/>
            <person name="Heijne W.H.M."/>
            <person name="Joardar V.S."/>
            <person name="Kiel J.A.K.W."/>
            <person name="Kovalchuk A."/>
            <person name="Martin J.F."/>
            <person name="Nierman W.C."/>
            <person name="Nijland J.G."/>
            <person name="Pronk J.T."/>
            <person name="Roubos J.A."/>
            <person name="van der Klei I.J."/>
            <person name="van Peij N.N.M.E."/>
            <person name="Veenhuis M."/>
            <person name="von Doehren H."/>
            <person name="Wagner C."/>
            <person name="Wortman J.R."/>
            <person name="Bovenberg R.A.L."/>
        </authorList>
    </citation>
    <scope>NUCLEOTIDE SEQUENCE [LARGE SCALE GENOMIC DNA]</scope>
    <source>
        <strain>ATCC 28089 / DSM 1075 / NRRL 1951 / Wisconsin 54-1255</strain>
    </source>
</reference>
<feature type="chain" id="PRO_0000383733" description="Cytosolic Fe-S cluster assembly factor nar1">
    <location>
        <begin position="1"/>
        <end position="604"/>
    </location>
</feature>
<feature type="region of interest" description="Disordered" evidence="3">
    <location>
        <begin position="434"/>
        <end position="461"/>
    </location>
</feature>
<feature type="compositionally biased region" description="Polar residues" evidence="3">
    <location>
        <begin position="451"/>
        <end position="461"/>
    </location>
</feature>
<feature type="binding site" evidence="2">
    <location>
        <position position="20"/>
    </location>
    <ligand>
        <name>[4Fe-4S] cluster</name>
        <dbReference type="ChEBI" id="CHEBI:49883"/>
        <label>1</label>
    </ligand>
</feature>
<feature type="binding site" evidence="2">
    <location>
        <position position="62"/>
    </location>
    <ligand>
        <name>[4Fe-4S] cluster</name>
        <dbReference type="ChEBI" id="CHEBI:49883"/>
        <label>1</label>
    </ligand>
</feature>
<feature type="binding site" evidence="2">
    <location>
        <position position="65"/>
    </location>
    <ligand>
        <name>[4Fe-4S] cluster</name>
        <dbReference type="ChEBI" id="CHEBI:49883"/>
        <label>1</label>
    </ligand>
</feature>
<feature type="binding site" evidence="2">
    <location>
        <position position="68"/>
    </location>
    <ligand>
        <name>[4Fe-4S] cluster</name>
        <dbReference type="ChEBI" id="CHEBI:49883"/>
        <label>1</label>
    </ligand>
</feature>
<feature type="binding site" evidence="2">
    <location>
        <position position="215"/>
    </location>
    <ligand>
        <name>[4Fe-4S] cluster</name>
        <dbReference type="ChEBI" id="CHEBI:49883"/>
        <label>2</label>
    </ligand>
</feature>
<feature type="binding site" evidence="2">
    <location>
        <position position="270"/>
    </location>
    <ligand>
        <name>[4Fe-4S] cluster</name>
        <dbReference type="ChEBI" id="CHEBI:49883"/>
        <label>2</label>
    </ligand>
</feature>
<feature type="binding site" evidence="2">
    <location>
        <position position="473"/>
    </location>
    <ligand>
        <name>[4Fe-4S] cluster</name>
        <dbReference type="ChEBI" id="CHEBI:49883"/>
        <label>2</label>
    </ligand>
</feature>
<feature type="binding site" evidence="2">
    <location>
        <position position="477"/>
    </location>
    <ligand>
        <name>[4Fe-4S] cluster</name>
        <dbReference type="ChEBI" id="CHEBI:49883"/>
        <label>2</label>
    </ligand>
</feature>
<gene>
    <name type="primary">nar1</name>
    <name type="ORF">Pc22g05110</name>
</gene>
<sequence length="604" mass="65518">MSAILSADDLNDFISPGVACIKPVETLPPKDTKNQEDAYEVTTEDKVQPEDLPPAQISLTDCLACSGCVTSAEAVLISLQSHAEVLNTLDAHPEIPLTHEPHGVGVNNTEDSKEGKIFVASVSPQVRASLATTYGISEKEAGYMIDQLLSGPQGLRGGGKHGNGFTWVVDTNAMREAVLVLTADEVSDSLNSGESSAMSQSDDSLPKRPILSSACPGWICYAEKTHPFILPHLSRLKSPQALSGTFLKTVLSKSLGVHPSRIWHLAVMPCFDKKLEASREELTDMSWRQGDSSGSESQPVRDVDCVITARELLSLASSRGSSLRDLPLQPLHSSFNPPFPEKTLDSFLSLKRSRAEQSLATGTSGGYLHHVLMTFQARNPGSELVVNRGRNVDVVEYVLMSPEGQPILKAARYYGFRNIQNLVRKLKPARVSRLPGAKPAVRPAAGRRQPMSRNAVSTGSSGSDYAYVEVMACPGGCTNGGGQIRVEDARETLGPSQGESLDASMKPSPHEQRAWLARVDEAYFSMDSESESELETQSQLLSLADKEAKIHERLRSWSEYMNIPLSKLVYTTYRKVESDVGKDQTPANDTSRVVELAGKIGGGW</sequence>
<proteinExistence type="inferred from homology"/>